<protein>
    <recommendedName>
        <fullName evidence="1">Large ribosomal subunit protein bL31B</fullName>
    </recommendedName>
    <alternativeName>
        <fullName evidence="2">50S ribosomal protein L31 type B</fullName>
    </alternativeName>
</protein>
<keyword id="KW-1185">Reference proteome</keyword>
<keyword id="KW-0687">Ribonucleoprotein</keyword>
<keyword id="KW-0689">Ribosomal protein</keyword>
<dbReference type="EMBL" id="BA000004">
    <property type="protein sequence ID" value="BAB07499.1"/>
    <property type="molecule type" value="Genomic_DNA"/>
</dbReference>
<dbReference type="PIR" id="D84122">
    <property type="entry name" value="D84122"/>
</dbReference>
<dbReference type="RefSeq" id="WP_010899905.1">
    <property type="nucleotide sequence ID" value="NC_002570.2"/>
</dbReference>
<dbReference type="SMR" id="Q9K6E9"/>
<dbReference type="STRING" id="272558.gene:10729693"/>
<dbReference type="GeneID" id="87599326"/>
<dbReference type="KEGG" id="bha:BH3780"/>
<dbReference type="eggNOG" id="COG0254">
    <property type="taxonomic scope" value="Bacteria"/>
</dbReference>
<dbReference type="HOGENOM" id="CLU_114306_2_2_9"/>
<dbReference type="OrthoDB" id="9803251at2"/>
<dbReference type="Proteomes" id="UP000001258">
    <property type="component" value="Chromosome"/>
</dbReference>
<dbReference type="GO" id="GO:1990904">
    <property type="term" value="C:ribonucleoprotein complex"/>
    <property type="evidence" value="ECO:0007669"/>
    <property type="project" value="UniProtKB-KW"/>
</dbReference>
<dbReference type="GO" id="GO:0005840">
    <property type="term" value="C:ribosome"/>
    <property type="evidence" value="ECO:0007669"/>
    <property type="project" value="UniProtKB-KW"/>
</dbReference>
<dbReference type="GO" id="GO:0003735">
    <property type="term" value="F:structural constituent of ribosome"/>
    <property type="evidence" value="ECO:0007669"/>
    <property type="project" value="InterPro"/>
</dbReference>
<dbReference type="GO" id="GO:0006412">
    <property type="term" value="P:translation"/>
    <property type="evidence" value="ECO:0007669"/>
    <property type="project" value="UniProtKB-UniRule"/>
</dbReference>
<dbReference type="Gene3D" id="4.10.830.30">
    <property type="entry name" value="Ribosomal protein L31"/>
    <property type="match status" value="1"/>
</dbReference>
<dbReference type="HAMAP" id="MF_00502">
    <property type="entry name" value="Ribosomal_bL31_2"/>
    <property type="match status" value="1"/>
</dbReference>
<dbReference type="InterPro" id="IPR034704">
    <property type="entry name" value="Ribosomal_bL28/bL31-like_sf"/>
</dbReference>
<dbReference type="InterPro" id="IPR002150">
    <property type="entry name" value="Ribosomal_bL31"/>
</dbReference>
<dbReference type="InterPro" id="IPR027493">
    <property type="entry name" value="Ribosomal_bL31_B"/>
</dbReference>
<dbReference type="InterPro" id="IPR042105">
    <property type="entry name" value="Ribosomal_bL31_sf"/>
</dbReference>
<dbReference type="NCBIfam" id="TIGR00105">
    <property type="entry name" value="L31"/>
    <property type="match status" value="1"/>
</dbReference>
<dbReference type="NCBIfam" id="NF002462">
    <property type="entry name" value="PRK01678.1"/>
    <property type="match status" value="1"/>
</dbReference>
<dbReference type="PANTHER" id="PTHR33280">
    <property type="entry name" value="50S RIBOSOMAL PROTEIN L31, CHLOROPLASTIC"/>
    <property type="match status" value="1"/>
</dbReference>
<dbReference type="PANTHER" id="PTHR33280:SF1">
    <property type="entry name" value="LARGE RIBOSOMAL SUBUNIT PROTEIN BL31C"/>
    <property type="match status" value="1"/>
</dbReference>
<dbReference type="Pfam" id="PF01197">
    <property type="entry name" value="Ribosomal_L31"/>
    <property type="match status" value="1"/>
</dbReference>
<dbReference type="PRINTS" id="PR01249">
    <property type="entry name" value="RIBOSOMALL31"/>
</dbReference>
<dbReference type="SUPFAM" id="SSF143800">
    <property type="entry name" value="L28p-like"/>
    <property type="match status" value="1"/>
</dbReference>
<dbReference type="PROSITE" id="PS01143">
    <property type="entry name" value="RIBOSOMAL_L31"/>
    <property type="match status" value="1"/>
</dbReference>
<reference key="1">
    <citation type="journal article" date="2000" name="Nucleic Acids Res.">
        <title>Complete genome sequence of the alkaliphilic bacterium Bacillus halodurans and genomic sequence comparison with Bacillus subtilis.</title>
        <authorList>
            <person name="Takami H."/>
            <person name="Nakasone K."/>
            <person name="Takaki Y."/>
            <person name="Maeno G."/>
            <person name="Sasaki R."/>
            <person name="Masui N."/>
            <person name="Fuji F."/>
            <person name="Hirama C."/>
            <person name="Nakamura Y."/>
            <person name="Ogasawara N."/>
            <person name="Kuhara S."/>
            <person name="Horikoshi K."/>
        </authorList>
    </citation>
    <scope>NUCLEOTIDE SEQUENCE [LARGE SCALE GENOMIC DNA]</scope>
    <source>
        <strain>ATCC BAA-125 / DSM 18197 / FERM 7344 / JCM 9153 / C-125</strain>
    </source>
</reference>
<gene>
    <name evidence="1" type="primary">rpmE2</name>
    <name type="ordered locus">BH3780</name>
</gene>
<name>RL31B_HALH5</name>
<proteinExistence type="inferred from homology"/>
<feature type="chain" id="PRO_0000173200" description="Large ribosomal subunit protein bL31B">
    <location>
        <begin position="1"/>
        <end position="81"/>
    </location>
</feature>
<accession>Q9K6E9</accession>
<evidence type="ECO:0000255" key="1">
    <source>
        <dbReference type="HAMAP-Rule" id="MF_00502"/>
    </source>
</evidence>
<evidence type="ECO:0000305" key="2"/>
<comment type="subunit">
    <text evidence="1">Part of the 50S ribosomal subunit.</text>
</comment>
<comment type="similarity">
    <text evidence="1">Belongs to the bacterial ribosomal protein bL31 family. Type B subfamily.</text>
</comment>
<organism>
    <name type="scientific">Halalkalibacterium halodurans (strain ATCC BAA-125 / DSM 18197 / FERM 7344 / JCM 9153 / C-125)</name>
    <name type="common">Bacillus halodurans</name>
    <dbReference type="NCBI Taxonomy" id="272558"/>
    <lineage>
        <taxon>Bacteria</taxon>
        <taxon>Bacillati</taxon>
        <taxon>Bacillota</taxon>
        <taxon>Bacilli</taxon>
        <taxon>Bacillales</taxon>
        <taxon>Bacillaceae</taxon>
        <taxon>Halalkalibacterium (ex Joshi et al. 2022)</taxon>
    </lineage>
</organism>
<sequence length="81" mass="9206">MKPGIHPDYKKVVFMDTSTGFKFLSGSTKTSNETIEWEDGNTYPLIKVEISSDSHPFYTGKQKLADAGGRVDRFKKKYNLK</sequence>